<keyword id="KW-0175">Coiled coil</keyword>
<keyword id="KW-0963">Cytoplasm</keyword>
<keyword id="KW-0479">Metal-binding</keyword>
<keyword id="KW-1185">Reference proteome</keyword>
<keyword id="KW-0677">Repeat</keyword>
<keyword id="KW-0862">Zinc</keyword>
<keyword id="KW-0863">Zinc-finger</keyword>
<reference key="1">
    <citation type="journal article" date="2005" name="Nature">
        <title>The genome of the social amoeba Dictyostelium discoideum.</title>
        <authorList>
            <person name="Eichinger L."/>
            <person name="Pachebat J.A."/>
            <person name="Gloeckner G."/>
            <person name="Rajandream M.A."/>
            <person name="Sucgang R."/>
            <person name="Berriman M."/>
            <person name="Song J."/>
            <person name="Olsen R."/>
            <person name="Szafranski K."/>
            <person name="Xu Q."/>
            <person name="Tunggal B."/>
            <person name="Kummerfeld S."/>
            <person name="Madera M."/>
            <person name="Konfortov B.A."/>
            <person name="Rivero F."/>
            <person name="Bankier A.T."/>
            <person name="Lehmann R."/>
            <person name="Hamlin N."/>
            <person name="Davies R."/>
            <person name="Gaudet P."/>
            <person name="Fey P."/>
            <person name="Pilcher K."/>
            <person name="Chen G."/>
            <person name="Saunders D."/>
            <person name="Sodergren E.J."/>
            <person name="Davis P."/>
            <person name="Kerhornou A."/>
            <person name="Nie X."/>
            <person name="Hall N."/>
            <person name="Anjard C."/>
            <person name="Hemphill L."/>
            <person name="Bason N."/>
            <person name="Farbrother P."/>
            <person name="Desany B."/>
            <person name="Just E."/>
            <person name="Morio T."/>
            <person name="Rost R."/>
            <person name="Churcher C.M."/>
            <person name="Cooper J."/>
            <person name="Haydock S."/>
            <person name="van Driessche N."/>
            <person name="Cronin A."/>
            <person name="Goodhead I."/>
            <person name="Muzny D.M."/>
            <person name="Mourier T."/>
            <person name="Pain A."/>
            <person name="Lu M."/>
            <person name="Harper D."/>
            <person name="Lindsay R."/>
            <person name="Hauser H."/>
            <person name="James K.D."/>
            <person name="Quiles M."/>
            <person name="Madan Babu M."/>
            <person name="Saito T."/>
            <person name="Buchrieser C."/>
            <person name="Wardroper A."/>
            <person name="Felder M."/>
            <person name="Thangavelu M."/>
            <person name="Johnson D."/>
            <person name="Knights A."/>
            <person name="Loulseged H."/>
            <person name="Mungall K.L."/>
            <person name="Oliver K."/>
            <person name="Price C."/>
            <person name="Quail M.A."/>
            <person name="Urushihara H."/>
            <person name="Hernandez J."/>
            <person name="Rabbinowitsch E."/>
            <person name="Steffen D."/>
            <person name="Sanders M."/>
            <person name="Ma J."/>
            <person name="Kohara Y."/>
            <person name="Sharp S."/>
            <person name="Simmonds M.N."/>
            <person name="Spiegler S."/>
            <person name="Tivey A."/>
            <person name="Sugano S."/>
            <person name="White B."/>
            <person name="Walker D."/>
            <person name="Woodward J.R."/>
            <person name="Winckler T."/>
            <person name="Tanaka Y."/>
            <person name="Shaulsky G."/>
            <person name="Schleicher M."/>
            <person name="Weinstock G.M."/>
            <person name="Rosenthal A."/>
            <person name="Cox E.C."/>
            <person name="Chisholm R.L."/>
            <person name="Gibbs R.A."/>
            <person name="Loomis W.F."/>
            <person name="Platzer M."/>
            <person name="Kay R.R."/>
            <person name="Williams J.G."/>
            <person name="Dear P.H."/>
            <person name="Noegel A.A."/>
            <person name="Barrell B.G."/>
            <person name="Kuspa A."/>
        </authorList>
    </citation>
    <scope>NUCLEOTIDE SEQUENCE [LARGE SCALE GENOMIC DNA]</scope>
    <source>
        <strain>AX4</strain>
    </source>
</reference>
<name>Y0971_DICDI</name>
<comment type="function">
    <text evidence="1">Probable adapter protein and signal transducer that links members of the tumor necrosis factor receptor family to different signaling pathways by association with the receptor cytoplasmic domain and kinases.</text>
</comment>
<comment type="subcellular location">
    <subcellularLocation>
        <location evidence="1">Cytoplasm</location>
    </subcellularLocation>
</comment>
<comment type="domain">
    <text>The MATH/TRAF domain binds to receptor cytoplasmic domains.</text>
</comment>
<comment type="similarity">
    <text evidence="5">Belongs to the TNF receptor-associated factor family. A subfamily.</text>
</comment>
<protein>
    <recommendedName>
        <fullName>TNF receptor-associated factor family protein DDB_G0290971</fullName>
    </recommendedName>
</protein>
<sequence length="445" mass="51600">MTVKYSINELLVDHESLSDNFTCPICFDLYYSSSSKKEVFQCRDGHLACKSCWSDSLLNKKECMICRTPVNSMNELSRNRFIENEFLKKKVYCPNSFFFIENVNVDDSSMNEALIRDESNGCKEIITVEALEKHQVECQFRFEKCPFTGCDKILRLKQIAEHKIDCKFSSKYCLHCDKEIPGQLDAHALVCPKVRIQCTQSESCKKSFPREQLRLHIDQDCKFTIVKCKYCCLNNSKNESIDFKRFELADHYEKVNHSFEMDKVINNQQLELVECKNQIYQINNKYEKLLERVIKLEQLSMDASNKLSLLPRFKNSIIFATFSTHKLKRVNEGISTVPLDVGNNKFKLTLYPNGYDESNKGNISAYLYRVSINEPAVKVSFTFVFNNQDSRKNRTYRIQEYTFNGGATSGWGYPKTLKTVDVDSANGWLTDEDKLVIGLRIQVLP</sequence>
<gene>
    <name type="ORF">DDB_G0290971</name>
</gene>
<organism>
    <name type="scientific">Dictyostelium discoideum</name>
    <name type="common">Social amoeba</name>
    <dbReference type="NCBI Taxonomy" id="44689"/>
    <lineage>
        <taxon>Eukaryota</taxon>
        <taxon>Amoebozoa</taxon>
        <taxon>Evosea</taxon>
        <taxon>Eumycetozoa</taxon>
        <taxon>Dictyostelia</taxon>
        <taxon>Dictyosteliales</taxon>
        <taxon>Dictyosteliaceae</taxon>
        <taxon>Dictyostelium</taxon>
    </lineage>
</organism>
<accession>Q54FB9</accession>
<dbReference type="EMBL" id="AAFI02000174">
    <property type="protein sequence ID" value="EAL61916.1"/>
    <property type="molecule type" value="Genomic_DNA"/>
</dbReference>
<dbReference type="RefSeq" id="XP_635418.1">
    <property type="nucleotide sequence ID" value="XM_630326.1"/>
</dbReference>
<dbReference type="SMR" id="Q54FB9"/>
<dbReference type="FunCoup" id="Q54FB9">
    <property type="interactions" value="11"/>
</dbReference>
<dbReference type="STRING" id="44689.Q54FB9"/>
<dbReference type="PaxDb" id="44689-DDB0189177"/>
<dbReference type="EnsemblProtists" id="EAL61916">
    <property type="protein sequence ID" value="EAL61916"/>
    <property type="gene ID" value="DDB_G0290971"/>
</dbReference>
<dbReference type="GeneID" id="8627919"/>
<dbReference type="KEGG" id="ddi:DDB_G0290971"/>
<dbReference type="dictyBase" id="DDB_G0290971">
    <property type="gene designation" value="trafE"/>
</dbReference>
<dbReference type="VEuPathDB" id="AmoebaDB:DDB_G0290971"/>
<dbReference type="eggNOG" id="KOG0297">
    <property type="taxonomic scope" value="Eukaryota"/>
</dbReference>
<dbReference type="HOGENOM" id="CLU_040980_0_0_1"/>
<dbReference type="InParanoid" id="Q54FB9"/>
<dbReference type="PhylomeDB" id="Q54FB9"/>
<dbReference type="PRO" id="PR:Q54FB9"/>
<dbReference type="Proteomes" id="UP000002195">
    <property type="component" value="Chromosome 5"/>
</dbReference>
<dbReference type="GO" id="GO:0005737">
    <property type="term" value="C:cytoplasm"/>
    <property type="evidence" value="ECO:0000318"/>
    <property type="project" value="GO_Central"/>
</dbReference>
<dbReference type="GO" id="GO:0036019">
    <property type="term" value="C:endolysosome"/>
    <property type="evidence" value="ECO:0000314"/>
    <property type="project" value="dictyBase"/>
</dbReference>
<dbReference type="GO" id="GO:0140220">
    <property type="term" value="C:pathogen-containing vacuole"/>
    <property type="evidence" value="ECO:0000314"/>
    <property type="project" value="dictyBase"/>
</dbReference>
<dbReference type="GO" id="GO:0061630">
    <property type="term" value="F:ubiquitin protein ligase activity"/>
    <property type="evidence" value="ECO:0000304"/>
    <property type="project" value="dictyBase"/>
</dbReference>
<dbReference type="GO" id="GO:0008270">
    <property type="term" value="F:zinc ion binding"/>
    <property type="evidence" value="ECO:0007669"/>
    <property type="project" value="UniProtKB-KW"/>
</dbReference>
<dbReference type="GO" id="GO:0050830">
    <property type="term" value="P:defense response to Gram-positive bacterium"/>
    <property type="evidence" value="ECO:0000315"/>
    <property type="project" value="dictyBase"/>
</dbReference>
<dbReference type="GO" id="GO:0097212">
    <property type="term" value="P:lysosomal membrane organization"/>
    <property type="evidence" value="ECO:0000315"/>
    <property type="project" value="dictyBase"/>
</dbReference>
<dbReference type="GO" id="GO:0001778">
    <property type="term" value="P:plasma membrane repair"/>
    <property type="evidence" value="ECO:0000315"/>
    <property type="project" value="dictyBase"/>
</dbReference>
<dbReference type="GO" id="GO:0036010">
    <property type="term" value="P:protein localization to endosome"/>
    <property type="evidence" value="ECO:0000315"/>
    <property type="project" value="dictyBase"/>
</dbReference>
<dbReference type="GO" id="GO:0010468">
    <property type="term" value="P:regulation of gene expression"/>
    <property type="evidence" value="ECO:0000315"/>
    <property type="project" value="dictyBase"/>
</dbReference>
<dbReference type="CDD" id="cd00121">
    <property type="entry name" value="MATH"/>
    <property type="match status" value="1"/>
</dbReference>
<dbReference type="CDD" id="cd16571">
    <property type="entry name" value="RING-HC_SIAHs"/>
    <property type="match status" value="1"/>
</dbReference>
<dbReference type="Gene3D" id="2.60.210.10">
    <property type="entry name" value="Apoptosis, Tumor Necrosis Factor Receptor Associated Protein 2, Chain A"/>
    <property type="match status" value="1"/>
</dbReference>
<dbReference type="Gene3D" id="3.30.40.10">
    <property type="entry name" value="Zinc/RING finger domain, C3HC4 (zinc finger)"/>
    <property type="match status" value="3"/>
</dbReference>
<dbReference type="InterPro" id="IPR002083">
    <property type="entry name" value="MATH/TRAF_dom"/>
</dbReference>
<dbReference type="InterPro" id="IPR008974">
    <property type="entry name" value="TRAF-like"/>
</dbReference>
<dbReference type="InterPro" id="IPR013083">
    <property type="entry name" value="Znf_RING/FYVE/PHD"/>
</dbReference>
<dbReference type="InterPro" id="IPR001293">
    <property type="entry name" value="Znf_TRAF"/>
</dbReference>
<dbReference type="PANTHER" id="PTHR10131:SF65">
    <property type="entry name" value="RING FINGER PROTEIN DG17-RELATED"/>
    <property type="match status" value="1"/>
</dbReference>
<dbReference type="PANTHER" id="PTHR10131">
    <property type="entry name" value="TNF RECEPTOR ASSOCIATED FACTOR"/>
    <property type="match status" value="1"/>
</dbReference>
<dbReference type="Pfam" id="PF22486">
    <property type="entry name" value="MATH_2"/>
    <property type="match status" value="1"/>
</dbReference>
<dbReference type="Pfam" id="PF02176">
    <property type="entry name" value="zf-TRAF"/>
    <property type="match status" value="1"/>
</dbReference>
<dbReference type="SUPFAM" id="SSF57850">
    <property type="entry name" value="RING/U-box"/>
    <property type="match status" value="1"/>
</dbReference>
<dbReference type="SUPFAM" id="SSF49599">
    <property type="entry name" value="TRAF domain-like"/>
    <property type="match status" value="3"/>
</dbReference>
<dbReference type="PROSITE" id="PS50144">
    <property type="entry name" value="MATH"/>
    <property type="match status" value="1"/>
</dbReference>
<dbReference type="PROSITE" id="PS50145">
    <property type="entry name" value="ZF_TRAF"/>
    <property type="match status" value="1"/>
</dbReference>
<proteinExistence type="inferred from homology"/>
<evidence type="ECO:0000250" key="1"/>
<evidence type="ECO:0000255" key="2"/>
<evidence type="ECO:0000255" key="3">
    <source>
        <dbReference type="PROSITE-ProRule" id="PRU00129"/>
    </source>
</evidence>
<evidence type="ECO:0000255" key="4">
    <source>
        <dbReference type="PROSITE-ProRule" id="PRU00207"/>
    </source>
</evidence>
<evidence type="ECO:0000305" key="5"/>
<feature type="chain" id="PRO_0000393760" description="TNF receptor-associated factor family protein DDB_G0290971">
    <location>
        <begin position="1"/>
        <end position="445"/>
    </location>
</feature>
<feature type="domain" description="MATH" evidence="3">
    <location>
        <begin position="314"/>
        <end position="441"/>
    </location>
</feature>
<feature type="zinc finger region" description="RING-type; degenerate">
    <location>
        <begin position="23"/>
        <end position="67"/>
    </location>
</feature>
<feature type="zinc finger region" description="TRAF-type 1" evidence="4">
    <location>
        <begin position="133"/>
        <end position="186"/>
    </location>
</feature>
<feature type="zinc finger region" description="TRAF-type 2" evidence="4">
    <location>
        <begin position="186"/>
        <end position="242"/>
    </location>
</feature>
<feature type="coiled-coil region" evidence="2">
    <location>
        <begin position="269"/>
        <end position="307"/>
    </location>
</feature>